<gene>
    <name evidence="1" type="primary">rpsB</name>
    <name type="ordered locus">SAB1118</name>
</gene>
<reference key="1">
    <citation type="journal article" date="2007" name="PLoS ONE">
        <title>Molecular correlates of host specialization in Staphylococcus aureus.</title>
        <authorList>
            <person name="Herron-Olson L."/>
            <person name="Fitzgerald J.R."/>
            <person name="Musser J.M."/>
            <person name="Kapur V."/>
        </authorList>
    </citation>
    <scope>NUCLEOTIDE SEQUENCE [LARGE SCALE GENOMIC DNA]</scope>
    <source>
        <strain>bovine RF122 / ET3-1</strain>
    </source>
</reference>
<dbReference type="EMBL" id="AJ938182">
    <property type="protein sequence ID" value="CAI80807.1"/>
    <property type="molecule type" value="Genomic_DNA"/>
</dbReference>
<dbReference type="RefSeq" id="WP_000268484.1">
    <property type="nucleotide sequence ID" value="NC_007622.1"/>
</dbReference>
<dbReference type="PDB" id="6FXC">
    <property type="method" value="EM"/>
    <property type="resolution" value="6.76 A"/>
    <property type="chains" value="Ab/Bb=1-226"/>
</dbReference>
<dbReference type="PDBsum" id="6FXC"/>
<dbReference type="EMDB" id="EMD-3637"/>
<dbReference type="SMR" id="Q2YXL2"/>
<dbReference type="GeneID" id="98345571"/>
<dbReference type="KEGG" id="sab:SAB1118"/>
<dbReference type="HOGENOM" id="CLU_040318_1_2_9"/>
<dbReference type="GO" id="GO:0022627">
    <property type="term" value="C:cytosolic small ribosomal subunit"/>
    <property type="evidence" value="ECO:0007669"/>
    <property type="project" value="TreeGrafter"/>
</dbReference>
<dbReference type="GO" id="GO:0003735">
    <property type="term" value="F:structural constituent of ribosome"/>
    <property type="evidence" value="ECO:0007669"/>
    <property type="project" value="InterPro"/>
</dbReference>
<dbReference type="GO" id="GO:0006412">
    <property type="term" value="P:translation"/>
    <property type="evidence" value="ECO:0007669"/>
    <property type="project" value="UniProtKB-UniRule"/>
</dbReference>
<dbReference type="CDD" id="cd01425">
    <property type="entry name" value="RPS2"/>
    <property type="match status" value="1"/>
</dbReference>
<dbReference type="FunFam" id="1.10.287.610:FF:000001">
    <property type="entry name" value="30S ribosomal protein S2"/>
    <property type="match status" value="1"/>
</dbReference>
<dbReference type="Gene3D" id="3.40.50.10490">
    <property type="entry name" value="Glucose-6-phosphate isomerase like protein, domain 1"/>
    <property type="match status" value="1"/>
</dbReference>
<dbReference type="Gene3D" id="1.10.287.610">
    <property type="entry name" value="Helix hairpin bin"/>
    <property type="match status" value="1"/>
</dbReference>
<dbReference type="HAMAP" id="MF_00291_B">
    <property type="entry name" value="Ribosomal_uS2_B"/>
    <property type="match status" value="1"/>
</dbReference>
<dbReference type="InterPro" id="IPR001865">
    <property type="entry name" value="Ribosomal_uS2"/>
</dbReference>
<dbReference type="InterPro" id="IPR005706">
    <property type="entry name" value="Ribosomal_uS2_bac/mit/plastid"/>
</dbReference>
<dbReference type="InterPro" id="IPR018130">
    <property type="entry name" value="Ribosomal_uS2_CS"/>
</dbReference>
<dbReference type="InterPro" id="IPR023591">
    <property type="entry name" value="Ribosomal_uS2_flav_dom_sf"/>
</dbReference>
<dbReference type="NCBIfam" id="TIGR01011">
    <property type="entry name" value="rpsB_bact"/>
    <property type="match status" value="1"/>
</dbReference>
<dbReference type="PANTHER" id="PTHR12534">
    <property type="entry name" value="30S RIBOSOMAL PROTEIN S2 PROKARYOTIC AND ORGANELLAR"/>
    <property type="match status" value="1"/>
</dbReference>
<dbReference type="PANTHER" id="PTHR12534:SF0">
    <property type="entry name" value="SMALL RIBOSOMAL SUBUNIT PROTEIN US2M"/>
    <property type="match status" value="1"/>
</dbReference>
<dbReference type="Pfam" id="PF00318">
    <property type="entry name" value="Ribosomal_S2"/>
    <property type="match status" value="1"/>
</dbReference>
<dbReference type="PRINTS" id="PR00395">
    <property type="entry name" value="RIBOSOMALS2"/>
</dbReference>
<dbReference type="SUPFAM" id="SSF52313">
    <property type="entry name" value="Ribosomal protein S2"/>
    <property type="match status" value="1"/>
</dbReference>
<dbReference type="PROSITE" id="PS00962">
    <property type="entry name" value="RIBOSOMAL_S2_1"/>
    <property type="match status" value="1"/>
</dbReference>
<dbReference type="PROSITE" id="PS00963">
    <property type="entry name" value="RIBOSOMAL_S2_2"/>
    <property type="match status" value="1"/>
</dbReference>
<comment type="similarity">
    <text evidence="1">Belongs to the universal ribosomal protein uS2 family.</text>
</comment>
<evidence type="ECO:0000255" key="1">
    <source>
        <dbReference type="HAMAP-Rule" id="MF_00291"/>
    </source>
</evidence>
<evidence type="ECO:0000256" key="2">
    <source>
        <dbReference type="SAM" id="MobiDB-lite"/>
    </source>
</evidence>
<evidence type="ECO:0000305" key="3"/>
<organism>
    <name type="scientific">Staphylococcus aureus (strain bovine RF122 / ET3-1)</name>
    <dbReference type="NCBI Taxonomy" id="273036"/>
    <lineage>
        <taxon>Bacteria</taxon>
        <taxon>Bacillati</taxon>
        <taxon>Bacillota</taxon>
        <taxon>Bacilli</taxon>
        <taxon>Bacillales</taxon>
        <taxon>Staphylococcaceae</taxon>
        <taxon>Staphylococcus</taxon>
    </lineage>
</organism>
<accession>Q2YXL2</accession>
<feature type="chain" id="PRO_1000004082" description="Small ribosomal subunit protein uS2">
    <location>
        <begin position="1"/>
        <end position="255"/>
    </location>
</feature>
<feature type="region of interest" description="Disordered" evidence="2">
    <location>
        <begin position="226"/>
        <end position="255"/>
    </location>
</feature>
<keyword id="KW-0002">3D-structure</keyword>
<keyword id="KW-0687">Ribonucleoprotein</keyword>
<keyword id="KW-0689">Ribosomal protein</keyword>
<proteinExistence type="evidence at protein level"/>
<name>RS2_STAAB</name>
<sequence length="255" mass="29094">MAVISMKQLLEAGVHFGHQTRRWNPKMKKYIFTERNGIYIIDLQKTVKKVDEAYNFLKQVSEDGGQVLFVGTKKQAQESVKSEAERAGQFYINQRWLGGLLTNYKTISKRIKRISEIEKMEEDGLFEVLPKKEVVELKKEYDRLIKFLGGIRDMKSMPQALFVVDPRKERNAIAEARKLNIPIVGIVDTNCDPDEIDYVIPANDDAIRAVKLLTAKMADAILEGQQGVSNEEVAAEQNIDLDEKEKSEETEATEE</sequence>
<protein>
    <recommendedName>
        <fullName evidence="1">Small ribosomal subunit protein uS2</fullName>
    </recommendedName>
    <alternativeName>
        <fullName evidence="3">30S ribosomal protein S2</fullName>
    </alternativeName>
</protein>